<dbReference type="EC" id="2.4.1.-"/>
<dbReference type="EMBL" id="AB028606">
    <property type="protein sequence ID" value="BAA97533.1"/>
    <property type="molecule type" value="Genomic_DNA"/>
</dbReference>
<dbReference type="EMBL" id="CP002688">
    <property type="protein sequence ID" value="AED94257.1"/>
    <property type="molecule type" value="Genomic_DNA"/>
</dbReference>
<dbReference type="EMBL" id="AK226694">
    <property type="protein sequence ID" value="BAE98801.1"/>
    <property type="molecule type" value="mRNA"/>
</dbReference>
<dbReference type="RefSeq" id="NP_198617.1">
    <property type="nucleotide sequence ID" value="NM_123160.3"/>
</dbReference>
<dbReference type="SMR" id="Q9LS21"/>
<dbReference type="FunCoup" id="Q9LS21">
    <property type="interactions" value="178"/>
</dbReference>
<dbReference type="STRING" id="3702.Q9LS21"/>
<dbReference type="CAZy" id="GT1">
    <property type="family name" value="Glycosyltransferase Family 1"/>
</dbReference>
<dbReference type="PaxDb" id="3702-AT5G38010.1"/>
<dbReference type="ProteomicsDB" id="228624"/>
<dbReference type="EnsemblPlants" id="AT5G38010.1">
    <property type="protein sequence ID" value="AT5G38010.1"/>
    <property type="gene ID" value="AT5G38010"/>
</dbReference>
<dbReference type="GeneID" id="833780"/>
<dbReference type="Gramene" id="AT5G38010.1">
    <property type="protein sequence ID" value="AT5G38010.1"/>
    <property type="gene ID" value="AT5G38010"/>
</dbReference>
<dbReference type="KEGG" id="ath:AT5G38010"/>
<dbReference type="Araport" id="AT5G38010"/>
<dbReference type="TAIR" id="AT5G38010"/>
<dbReference type="eggNOG" id="KOG1192">
    <property type="taxonomic scope" value="Eukaryota"/>
</dbReference>
<dbReference type="HOGENOM" id="CLU_001724_0_0_1"/>
<dbReference type="InParanoid" id="Q9LS21"/>
<dbReference type="OMA" id="RYVECVW"/>
<dbReference type="PhylomeDB" id="Q9LS21"/>
<dbReference type="BioCyc" id="ARA:AT5G38010-MONOMER"/>
<dbReference type="PRO" id="PR:Q9LS21"/>
<dbReference type="Proteomes" id="UP000006548">
    <property type="component" value="Chromosome 5"/>
</dbReference>
<dbReference type="ExpressionAtlas" id="Q9LS21">
    <property type="expression patterns" value="baseline and differential"/>
</dbReference>
<dbReference type="GO" id="GO:0008194">
    <property type="term" value="F:UDP-glycosyltransferase activity"/>
    <property type="evidence" value="ECO:0007669"/>
    <property type="project" value="InterPro"/>
</dbReference>
<dbReference type="CDD" id="cd03784">
    <property type="entry name" value="GT1_Gtf-like"/>
    <property type="match status" value="1"/>
</dbReference>
<dbReference type="FunFam" id="3.40.50.2000:FF:000040">
    <property type="entry name" value="UDP-glycosyltransferase 76C1"/>
    <property type="match status" value="1"/>
</dbReference>
<dbReference type="FunFam" id="3.40.50.2000:FF:000151">
    <property type="entry name" value="UDP-glycosyltransferase 76E9"/>
    <property type="match status" value="1"/>
</dbReference>
<dbReference type="Gene3D" id="3.40.50.2000">
    <property type="entry name" value="Glycogen Phosphorylase B"/>
    <property type="match status" value="2"/>
</dbReference>
<dbReference type="InterPro" id="IPR002213">
    <property type="entry name" value="UDP_glucos_trans"/>
</dbReference>
<dbReference type="PANTHER" id="PTHR11926:SF1494">
    <property type="entry name" value="FLAVONOL 3-O-GLUCOSYLTRANSFERASE UGT76E12-RELATED"/>
    <property type="match status" value="1"/>
</dbReference>
<dbReference type="PANTHER" id="PTHR11926">
    <property type="entry name" value="GLUCOSYL/GLUCURONOSYL TRANSFERASES"/>
    <property type="match status" value="1"/>
</dbReference>
<dbReference type="Pfam" id="PF00201">
    <property type="entry name" value="UDPGT"/>
    <property type="match status" value="1"/>
</dbReference>
<dbReference type="SUPFAM" id="SSF53756">
    <property type="entry name" value="UDP-Glycosyltransferase/glycogen phosphorylase"/>
    <property type="match status" value="1"/>
</dbReference>
<accession>Q9LS21</accession>
<accession>Q0WVP7</accession>
<reference key="1">
    <citation type="submission" date="1999-06" db="EMBL/GenBank/DDBJ databases">
        <title>Structural analysis of Arabidopsis thaliana chromosome 5. XI.</title>
        <authorList>
            <person name="Kaneko T."/>
            <person name="Katoh T."/>
            <person name="Asamizu E."/>
            <person name="Sato S."/>
            <person name="Nakamura Y."/>
            <person name="Kotani H."/>
            <person name="Tabata S."/>
        </authorList>
    </citation>
    <scope>NUCLEOTIDE SEQUENCE [LARGE SCALE GENOMIC DNA]</scope>
    <source>
        <strain>cv. Columbia</strain>
    </source>
</reference>
<reference key="2">
    <citation type="journal article" date="2017" name="Plant J.">
        <title>Araport11: a complete reannotation of the Arabidopsis thaliana reference genome.</title>
        <authorList>
            <person name="Cheng C.Y."/>
            <person name="Krishnakumar V."/>
            <person name="Chan A.P."/>
            <person name="Thibaud-Nissen F."/>
            <person name="Schobel S."/>
            <person name="Town C.D."/>
        </authorList>
    </citation>
    <scope>GENOME REANNOTATION</scope>
    <source>
        <strain>cv. Columbia</strain>
    </source>
</reference>
<reference key="3">
    <citation type="submission" date="2006-07" db="EMBL/GenBank/DDBJ databases">
        <title>Large-scale analysis of RIKEN Arabidopsis full-length (RAFL) cDNAs.</title>
        <authorList>
            <person name="Totoki Y."/>
            <person name="Seki M."/>
            <person name="Ishida J."/>
            <person name="Nakajima M."/>
            <person name="Enju A."/>
            <person name="Kamiya A."/>
            <person name="Narusaka M."/>
            <person name="Shin-i T."/>
            <person name="Nakagawa M."/>
            <person name="Sakamoto N."/>
            <person name="Oishi K."/>
            <person name="Kohara Y."/>
            <person name="Kobayashi M."/>
            <person name="Toyoda A."/>
            <person name="Sakaki Y."/>
            <person name="Sakurai T."/>
            <person name="Iida K."/>
            <person name="Akiyama K."/>
            <person name="Satou M."/>
            <person name="Toyoda T."/>
            <person name="Konagaya A."/>
            <person name="Carninci P."/>
            <person name="Kawai J."/>
            <person name="Hayashizaki Y."/>
            <person name="Shinozaki K."/>
        </authorList>
    </citation>
    <scope>NUCLEOTIDE SEQUENCE [LARGE SCALE MRNA]</scope>
    <source>
        <strain>cv. Columbia</strain>
    </source>
</reference>
<reference key="4">
    <citation type="journal article" date="2001" name="J. Biol. Chem.">
        <title>Phylogenetic analysis of the UDP-glycosyltransferase multigene family of Arabidopsis thaliana.</title>
        <authorList>
            <person name="Li Y."/>
            <person name="Baldauf S."/>
            <person name="Lim E.K."/>
            <person name="Bowles D.J."/>
        </authorList>
    </citation>
    <scope>GENE FAMILY</scope>
</reference>
<evidence type="ECO:0000250" key="1"/>
<evidence type="ECO:0000305" key="2"/>
<comment type="similarity">
    <text evidence="2">Belongs to the UDP-glycosyltransferase family.</text>
</comment>
<proteinExistence type="evidence at transcript level"/>
<keyword id="KW-0328">Glycosyltransferase</keyword>
<keyword id="KW-1185">Reference proteome</keyword>
<keyword id="KW-0808">Transferase</keyword>
<protein>
    <recommendedName>
        <fullName>UDP-glycosyltransferase 76E9</fullName>
        <ecNumber>2.4.1.-</ecNumber>
    </recommendedName>
</protein>
<organism>
    <name type="scientific">Arabidopsis thaliana</name>
    <name type="common">Mouse-ear cress</name>
    <dbReference type="NCBI Taxonomy" id="3702"/>
    <lineage>
        <taxon>Eukaryota</taxon>
        <taxon>Viridiplantae</taxon>
        <taxon>Streptophyta</taxon>
        <taxon>Embryophyta</taxon>
        <taxon>Tracheophyta</taxon>
        <taxon>Spermatophyta</taxon>
        <taxon>Magnoliopsida</taxon>
        <taxon>eudicotyledons</taxon>
        <taxon>Gunneridae</taxon>
        <taxon>Pentapetalae</taxon>
        <taxon>rosids</taxon>
        <taxon>malvids</taxon>
        <taxon>Brassicales</taxon>
        <taxon>Brassicaceae</taxon>
        <taxon>Camelineae</taxon>
        <taxon>Arabidopsis</taxon>
    </lineage>
</organism>
<name>U76E9_ARATH</name>
<feature type="chain" id="PRO_0000409093" description="UDP-glycosyltransferase 76E9">
    <location>
        <begin position="1"/>
        <end position="453"/>
    </location>
</feature>
<feature type="binding site" evidence="1">
    <location>
        <position position="279"/>
    </location>
    <ligand>
        <name>UDP-alpha-D-glucose</name>
        <dbReference type="ChEBI" id="CHEBI:58885"/>
    </ligand>
</feature>
<feature type="binding site" evidence="1">
    <location>
        <begin position="337"/>
        <end position="339"/>
    </location>
    <ligand>
        <name>UDP-alpha-D-glucose</name>
        <dbReference type="ChEBI" id="CHEBI:58885"/>
    </ligand>
</feature>
<feature type="binding site" evidence="1">
    <location>
        <begin position="354"/>
        <end position="362"/>
    </location>
    <ligand>
        <name>UDP-alpha-D-glucose</name>
        <dbReference type="ChEBI" id="CHEBI:58885"/>
    </ligand>
</feature>
<feature type="binding site" evidence="1">
    <location>
        <begin position="376"/>
        <end position="379"/>
    </location>
    <ligand>
        <name>UDP-alpha-D-glucose</name>
        <dbReference type="ChEBI" id="CHEBI:58885"/>
    </ligand>
</feature>
<feature type="sequence conflict" description="In Ref. 3; BAE98801." evidence="2" ref="3">
    <original>A</original>
    <variation>T</variation>
    <location>
        <position position="248"/>
    </location>
</feature>
<gene>
    <name type="primary">UGT76E9</name>
    <name type="ordered locus">At5g38010</name>
    <name type="ORF">F16F17.1</name>
</gene>
<sequence length="453" mass="50711">MEEKQERRRRIVLIPAPAQGHISPMMQLARALHLKGFSITVAQTKFNYLKPSKDLADFQFITIPESLPASDLKNLGPVWFLLKLNKECEFSFKECLGQLLLQKQLIPEEEIACVIYDEFMYFAEAAAKEFNLPKVIFSTENATAFACRSAMCKLYAKDGLAPLKEGCGREEELVPKLHPLRYKDLPTSAFAPVEASVEVFKSSCDKGTASAMIINTVRCLEISSLEWLQQELKIPIYPIGPLHMVSSAPPTSLLDENESCIDWLNKQKPSSVIYISLGSFTLLETKEVLEMASGLVSSNQHFLWVIRPGSILGSELTNEELLSMMEIPDRGYIVKWAPQKQVLAHSAVGAFWSHCGWNSTLESMGEGVPMICRPFTTDQKVNARYVECVWRVGVQVEGELKRGVVERAVKRLLVDEEGEEMKLRALSLKEKLKVSVLPGGSSHSSLDDLIKTL</sequence>